<organism>
    <name type="scientific">Salmonella paratyphi B (strain ATCC BAA-1250 / SPB7)</name>
    <dbReference type="NCBI Taxonomy" id="1016998"/>
    <lineage>
        <taxon>Bacteria</taxon>
        <taxon>Pseudomonadati</taxon>
        <taxon>Pseudomonadota</taxon>
        <taxon>Gammaproteobacteria</taxon>
        <taxon>Enterobacterales</taxon>
        <taxon>Enterobacteriaceae</taxon>
        <taxon>Salmonella</taxon>
    </lineage>
</organism>
<reference key="1">
    <citation type="submission" date="2007-11" db="EMBL/GenBank/DDBJ databases">
        <authorList>
            <consortium name="The Salmonella enterica serovar Paratyphi B Genome Sequencing Project"/>
            <person name="McClelland M."/>
            <person name="Sanderson E.K."/>
            <person name="Porwollik S."/>
            <person name="Spieth J."/>
            <person name="Clifton W.S."/>
            <person name="Fulton R."/>
            <person name="Cordes M."/>
            <person name="Wollam A."/>
            <person name="Shah N."/>
            <person name="Pepin K."/>
            <person name="Bhonagiri V."/>
            <person name="Nash W."/>
            <person name="Johnson M."/>
            <person name="Thiruvilangam P."/>
            <person name="Wilson R."/>
        </authorList>
    </citation>
    <scope>NUCLEOTIDE SEQUENCE [LARGE SCALE GENOMIC DNA]</scope>
    <source>
        <strain>ATCC BAA-1250 / SPB7</strain>
    </source>
</reference>
<accession>A9MYH6</accession>
<name>OADG_SALPB</name>
<dbReference type="EC" id="7.2.4.2" evidence="1"/>
<dbReference type="EMBL" id="CP000886">
    <property type="protein sequence ID" value="ABX65510.1"/>
    <property type="molecule type" value="Genomic_DNA"/>
</dbReference>
<dbReference type="RefSeq" id="WP_001001146.1">
    <property type="nucleotide sequence ID" value="NC_010102.1"/>
</dbReference>
<dbReference type="SMR" id="A9MYH6"/>
<dbReference type="KEGG" id="spq:SPAB_00067"/>
<dbReference type="PATRIC" id="fig|1016998.12.peg.66"/>
<dbReference type="HOGENOM" id="CLU_168750_3_2_6"/>
<dbReference type="BioCyc" id="SENT1016998:SPAB_RS00280-MONOMER"/>
<dbReference type="Proteomes" id="UP000008556">
    <property type="component" value="Chromosome"/>
</dbReference>
<dbReference type="GO" id="GO:0005886">
    <property type="term" value="C:plasma membrane"/>
    <property type="evidence" value="ECO:0007669"/>
    <property type="project" value="UniProtKB-SubCell"/>
</dbReference>
<dbReference type="GO" id="GO:0015451">
    <property type="term" value="F:decarboxylation-driven active transmembrane transporter activity"/>
    <property type="evidence" value="ECO:0007669"/>
    <property type="project" value="UniProtKB-EC"/>
</dbReference>
<dbReference type="GO" id="GO:0008948">
    <property type="term" value="F:oxaloacetate decarboxylase activity"/>
    <property type="evidence" value="ECO:0007669"/>
    <property type="project" value="UniProtKB-UniRule"/>
</dbReference>
<dbReference type="GO" id="GO:0015081">
    <property type="term" value="F:sodium ion transmembrane transporter activity"/>
    <property type="evidence" value="ECO:0007669"/>
    <property type="project" value="UniProtKB-UniRule"/>
</dbReference>
<dbReference type="GO" id="GO:0036376">
    <property type="term" value="P:sodium ion export across plasma membrane"/>
    <property type="evidence" value="ECO:0007669"/>
    <property type="project" value="InterPro"/>
</dbReference>
<dbReference type="HAMAP" id="MF_00404">
    <property type="entry name" value="OadG"/>
    <property type="match status" value="1"/>
</dbReference>
<dbReference type="InterPro" id="IPR005899">
    <property type="entry name" value="Na_pump_deCOase"/>
</dbReference>
<dbReference type="InterPro" id="IPR023424">
    <property type="entry name" value="OadG"/>
</dbReference>
<dbReference type="NCBIfam" id="TIGR01195">
    <property type="entry name" value="oadG_fam"/>
    <property type="match status" value="1"/>
</dbReference>
<dbReference type="NCBIfam" id="NF002792">
    <property type="entry name" value="PRK02919.1"/>
    <property type="match status" value="1"/>
</dbReference>
<dbReference type="Pfam" id="PF04277">
    <property type="entry name" value="OAD_gamma"/>
    <property type="match status" value="1"/>
</dbReference>
<protein>
    <recommendedName>
        <fullName evidence="1">Probable oxaloacetate decarboxylase gamma chain</fullName>
        <ecNumber evidence="1">7.2.4.2</ecNumber>
    </recommendedName>
</protein>
<gene>
    <name evidence="1" type="primary">oadG</name>
    <name type="ordered locus">SPAB_00067</name>
</gene>
<feature type="chain" id="PRO_1000123548" description="Probable oxaloacetate decarboxylase gamma chain">
    <location>
        <begin position="1"/>
        <end position="79"/>
    </location>
</feature>
<feature type="transmembrane region" description="Helical" evidence="1">
    <location>
        <begin position="12"/>
        <end position="32"/>
    </location>
</feature>
<proteinExistence type="inferred from homology"/>
<sequence>MNEAVLLGEGFTLMFLGMGFVLAFLFLLIFAIRGMSVAITRLFPEPVAAPAPRAVPVVDDFTRLKPVIAAAIHHHRLNA</sequence>
<keyword id="KW-1003">Cell membrane</keyword>
<keyword id="KW-0406">Ion transport</keyword>
<keyword id="KW-0472">Membrane</keyword>
<keyword id="KW-0915">Sodium</keyword>
<keyword id="KW-0739">Sodium transport</keyword>
<keyword id="KW-1278">Translocase</keyword>
<keyword id="KW-0812">Transmembrane</keyword>
<keyword id="KW-1133">Transmembrane helix</keyword>
<keyword id="KW-0813">Transport</keyword>
<evidence type="ECO:0000255" key="1">
    <source>
        <dbReference type="HAMAP-Rule" id="MF_00404"/>
    </source>
</evidence>
<comment type="function">
    <text evidence="1">Catalyzes the decarboxylation of oxaloacetate coupled to Na(+) translocation.</text>
</comment>
<comment type="catalytic activity">
    <reaction evidence="1">
        <text>oxaloacetate + 2 Na(+)(in) + H(+) = pyruvate + 2 Na(+)(out) + CO2</text>
        <dbReference type="Rhea" id="RHEA:57724"/>
        <dbReference type="ChEBI" id="CHEBI:15361"/>
        <dbReference type="ChEBI" id="CHEBI:15378"/>
        <dbReference type="ChEBI" id="CHEBI:16452"/>
        <dbReference type="ChEBI" id="CHEBI:16526"/>
        <dbReference type="ChEBI" id="CHEBI:29101"/>
        <dbReference type="EC" id="7.2.4.2"/>
    </reaction>
</comment>
<comment type="cofactor">
    <cofactor evidence="1">
        <name>Na(+)</name>
        <dbReference type="ChEBI" id="CHEBI:29101"/>
    </cofactor>
</comment>
<comment type="subunit">
    <text evidence="1">Heterotrimer of an alpha, a beta and a gamma subunit.</text>
</comment>
<comment type="subcellular location">
    <subcellularLocation>
        <location evidence="1">Cell membrane</location>
        <topology evidence="1">Single-pass membrane protein</topology>
    </subcellularLocation>
</comment>
<comment type="similarity">
    <text evidence="1">Belongs to the OadG family.</text>
</comment>